<keyword id="KW-1015">Disulfide bond</keyword>
<keyword id="KW-0325">Glycoprotein</keyword>
<keyword id="KW-0960">Knottin</keyword>
<keyword id="KW-0964">Secreted</keyword>
<keyword id="KW-0732">Signal</keyword>
<sequence length="132" mass="14657">MDVTRLLLATLLVFLCFFTAYSHPPPEEKLRDDRSLRSNSSVNLLDFPSVSIVALNKKSKQISRKEAEKKRSSKKEASMKKVARPRTPLSAPCVATRDSCKPPAPACCDPCASCQCRFFRSACSCRVLSLNC</sequence>
<evidence type="ECO:0000250" key="1"/>
<evidence type="ECO:0000250" key="2">
    <source>
        <dbReference type="UniProtKB" id="P42127"/>
    </source>
</evidence>
<evidence type="ECO:0000250" key="3">
    <source>
        <dbReference type="UniProtKB" id="Q03288"/>
    </source>
</evidence>
<evidence type="ECO:0000255" key="4"/>
<evidence type="ECO:0000255" key="5">
    <source>
        <dbReference type="PROSITE-ProRule" id="PRU00494"/>
    </source>
</evidence>
<evidence type="ECO:0000256" key="6">
    <source>
        <dbReference type="SAM" id="MobiDB-lite"/>
    </source>
</evidence>
<dbReference type="EMBL" id="AB236874">
    <property type="protein sequence ID" value="BAE93022.1"/>
    <property type="molecule type" value="Genomic_DNA"/>
</dbReference>
<dbReference type="GlyCosmos" id="Q1XGV2">
    <property type="glycosylation" value="1 site, No reported glycans"/>
</dbReference>
<dbReference type="GO" id="GO:0005615">
    <property type="term" value="C:extracellular space"/>
    <property type="evidence" value="ECO:0000250"/>
    <property type="project" value="UniProtKB"/>
</dbReference>
<dbReference type="GO" id="GO:0031779">
    <property type="term" value="F:melanocortin receptor binding"/>
    <property type="evidence" value="ECO:0007669"/>
    <property type="project" value="TreeGrafter"/>
</dbReference>
<dbReference type="GO" id="GO:0005184">
    <property type="term" value="F:neuropeptide hormone activity"/>
    <property type="evidence" value="ECO:0007669"/>
    <property type="project" value="TreeGrafter"/>
</dbReference>
<dbReference type="GO" id="GO:0009755">
    <property type="term" value="P:hormone-mediated signaling pathway"/>
    <property type="evidence" value="ECO:0007669"/>
    <property type="project" value="InterPro"/>
</dbReference>
<dbReference type="GO" id="GO:0042438">
    <property type="term" value="P:melanin biosynthetic process"/>
    <property type="evidence" value="ECO:0000250"/>
    <property type="project" value="UniProtKB"/>
</dbReference>
<dbReference type="GO" id="GO:0032438">
    <property type="term" value="P:melanosome organization"/>
    <property type="evidence" value="ECO:0007669"/>
    <property type="project" value="TreeGrafter"/>
</dbReference>
<dbReference type="FunFam" id="4.10.760.10:FF:000002">
    <property type="entry name" value="Agouti-signaling protein"/>
    <property type="match status" value="1"/>
</dbReference>
<dbReference type="Gene3D" id="4.10.760.10">
    <property type="entry name" value="Agouti domain"/>
    <property type="match status" value="1"/>
</dbReference>
<dbReference type="InterPro" id="IPR007733">
    <property type="entry name" value="Agouti"/>
</dbReference>
<dbReference type="InterPro" id="IPR027300">
    <property type="entry name" value="Agouti_dom"/>
</dbReference>
<dbReference type="InterPro" id="IPR036836">
    <property type="entry name" value="Agouti_dom_sf"/>
</dbReference>
<dbReference type="PANTHER" id="PTHR16551">
    <property type="entry name" value="AGOUTI RELATED"/>
    <property type="match status" value="1"/>
</dbReference>
<dbReference type="PANTHER" id="PTHR16551:SF1">
    <property type="entry name" value="AGOUTI-SIGNALING PROTEIN"/>
    <property type="match status" value="1"/>
</dbReference>
<dbReference type="Pfam" id="PF05039">
    <property type="entry name" value="Agouti"/>
    <property type="match status" value="1"/>
</dbReference>
<dbReference type="SMART" id="SM00792">
    <property type="entry name" value="Agouti"/>
    <property type="match status" value="1"/>
</dbReference>
<dbReference type="SUPFAM" id="SSF57055">
    <property type="entry name" value="Agouti-related protein"/>
    <property type="match status" value="1"/>
</dbReference>
<dbReference type="PROSITE" id="PS60024">
    <property type="entry name" value="AGOUTI_1"/>
    <property type="match status" value="1"/>
</dbReference>
<dbReference type="PROSITE" id="PS51150">
    <property type="entry name" value="AGOUTI_2"/>
    <property type="match status" value="1"/>
</dbReference>
<proteinExistence type="inferred from homology"/>
<accession>Q1XGV2</accession>
<organism>
    <name type="scientific">Macaca radiata</name>
    <name type="common">Bonnet macaque</name>
    <dbReference type="NCBI Taxonomy" id="9548"/>
    <lineage>
        <taxon>Eukaryota</taxon>
        <taxon>Metazoa</taxon>
        <taxon>Chordata</taxon>
        <taxon>Craniata</taxon>
        <taxon>Vertebrata</taxon>
        <taxon>Euteleostomi</taxon>
        <taxon>Mammalia</taxon>
        <taxon>Eutheria</taxon>
        <taxon>Euarchontoglires</taxon>
        <taxon>Primates</taxon>
        <taxon>Haplorrhini</taxon>
        <taxon>Catarrhini</taxon>
        <taxon>Cercopithecidae</taxon>
        <taxon>Cercopithecinae</taxon>
        <taxon>Macaca</taxon>
    </lineage>
</organism>
<comment type="function">
    <text evidence="3">Involved in the regulation of melanogenesis. The binding of ASP to MC1R precludes alpha-MSH initiated signaling and thus blocks production of cAMP, leading to a down-regulation of eumelanogenesis (brown/black pigment) and thus increasing synthesis of pheomelanin (yellow/red pigment) (By similarity).</text>
</comment>
<comment type="subcellular location">
    <subcellularLocation>
        <location evidence="2">Secreted</location>
    </subcellularLocation>
</comment>
<comment type="domain">
    <text evidence="1">The presence of a 'disulfide through disulfide knot' structurally defines this protein as a knottin.</text>
</comment>
<name>ASIP_MACRA</name>
<protein>
    <recommendedName>
        <fullName>Agouti-signaling protein</fullName>
        <shortName>ASP</shortName>
    </recommendedName>
    <alternativeName>
        <fullName>Agouti switch protein</fullName>
    </alternativeName>
</protein>
<gene>
    <name type="primary">ASIP</name>
</gene>
<reference key="1">
    <citation type="journal article" date="2006" name="Genome Res.">
        <title>Alu-mediated 100-kb deletion in the primate genome: the loss of the agouti signaling protein gene in the lesser apes.</title>
        <authorList>
            <person name="Nakayama K."/>
            <person name="Ishida T."/>
        </authorList>
    </citation>
    <scope>NUCLEOTIDE SEQUENCE [GENOMIC DNA]</scope>
</reference>
<feature type="signal peptide" evidence="4">
    <location>
        <begin position="1"/>
        <end position="22"/>
    </location>
</feature>
<feature type="chain" id="PRO_0000235186" description="Agouti-signaling protein">
    <location>
        <begin position="23"/>
        <end position="132"/>
    </location>
</feature>
<feature type="domain" description="Agouti" evidence="5">
    <location>
        <begin position="93"/>
        <end position="132"/>
    </location>
</feature>
<feature type="region of interest" description="Disordered" evidence="6">
    <location>
        <begin position="62"/>
        <end position="88"/>
    </location>
</feature>
<feature type="compositionally biased region" description="Basic and acidic residues" evidence="6">
    <location>
        <begin position="63"/>
        <end position="79"/>
    </location>
</feature>
<feature type="glycosylation site" description="N-linked (GlcNAc...) asparagine" evidence="4">
    <location>
        <position position="39"/>
    </location>
</feature>
<feature type="disulfide bond" evidence="5">
    <location>
        <begin position="93"/>
        <end position="108"/>
    </location>
</feature>
<feature type="disulfide bond" evidence="5">
    <location>
        <begin position="100"/>
        <end position="114"/>
    </location>
</feature>
<feature type="disulfide bond" evidence="5">
    <location>
        <begin position="107"/>
        <end position="125"/>
    </location>
</feature>
<feature type="disulfide bond" evidence="5">
    <location>
        <begin position="111"/>
        <end position="132"/>
    </location>
</feature>
<feature type="disulfide bond" evidence="5">
    <location>
        <begin position="116"/>
        <end position="123"/>
    </location>
</feature>